<gene>
    <name evidence="1" type="primary">rplA</name>
    <name type="ordered locus">swp_1999</name>
</gene>
<dbReference type="EMBL" id="CP000472">
    <property type="protein sequence ID" value="ACJ28756.1"/>
    <property type="molecule type" value="Genomic_DNA"/>
</dbReference>
<dbReference type="RefSeq" id="WP_020912129.1">
    <property type="nucleotide sequence ID" value="NC_011566.1"/>
</dbReference>
<dbReference type="SMR" id="B8CNC2"/>
<dbReference type="STRING" id="225849.swp_1999"/>
<dbReference type="KEGG" id="swp:swp_1999"/>
<dbReference type="eggNOG" id="COG0081">
    <property type="taxonomic scope" value="Bacteria"/>
</dbReference>
<dbReference type="HOGENOM" id="CLU_062853_0_0_6"/>
<dbReference type="OrthoDB" id="9803740at2"/>
<dbReference type="Proteomes" id="UP000000753">
    <property type="component" value="Chromosome"/>
</dbReference>
<dbReference type="GO" id="GO:0022625">
    <property type="term" value="C:cytosolic large ribosomal subunit"/>
    <property type="evidence" value="ECO:0007669"/>
    <property type="project" value="TreeGrafter"/>
</dbReference>
<dbReference type="GO" id="GO:0019843">
    <property type="term" value="F:rRNA binding"/>
    <property type="evidence" value="ECO:0007669"/>
    <property type="project" value="UniProtKB-UniRule"/>
</dbReference>
<dbReference type="GO" id="GO:0003735">
    <property type="term" value="F:structural constituent of ribosome"/>
    <property type="evidence" value="ECO:0007669"/>
    <property type="project" value="InterPro"/>
</dbReference>
<dbReference type="GO" id="GO:0000049">
    <property type="term" value="F:tRNA binding"/>
    <property type="evidence" value="ECO:0007669"/>
    <property type="project" value="UniProtKB-KW"/>
</dbReference>
<dbReference type="GO" id="GO:0006417">
    <property type="term" value="P:regulation of translation"/>
    <property type="evidence" value="ECO:0007669"/>
    <property type="project" value="UniProtKB-KW"/>
</dbReference>
<dbReference type="GO" id="GO:0006412">
    <property type="term" value="P:translation"/>
    <property type="evidence" value="ECO:0007669"/>
    <property type="project" value="UniProtKB-UniRule"/>
</dbReference>
<dbReference type="CDD" id="cd00403">
    <property type="entry name" value="Ribosomal_L1"/>
    <property type="match status" value="1"/>
</dbReference>
<dbReference type="FunFam" id="3.40.50.790:FF:000001">
    <property type="entry name" value="50S ribosomal protein L1"/>
    <property type="match status" value="1"/>
</dbReference>
<dbReference type="Gene3D" id="3.30.190.20">
    <property type="match status" value="1"/>
</dbReference>
<dbReference type="Gene3D" id="3.40.50.790">
    <property type="match status" value="1"/>
</dbReference>
<dbReference type="HAMAP" id="MF_01318_B">
    <property type="entry name" value="Ribosomal_uL1_B"/>
    <property type="match status" value="1"/>
</dbReference>
<dbReference type="InterPro" id="IPR005878">
    <property type="entry name" value="Ribosom_uL1_bac-type"/>
</dbReference>
<dbReference type="InterPro" id="IPR002143">
    <property type="entry name" value="Ribosomal_uL1"/>
</dbReference>
<dbReference type="InterPro" id="IPR023674">
    <property type="entry name" value="Ribosomal_uL1-like"/>
</dbReference>
<dbReference type="InterPro" id="IPR028364">
    <property type="entry name" value="Ribosomal_uL1/biogenesis"/>
</dbReference>
<dbReference type="InterPro" id="IPR016095">
    <property type="entry name" value="Ribosomal_uL1_3-a/b-sand"/>
</dbReference>
<dbReference type="InterPro" id="IPR023673">
    <property type="entry name" value="Ribosomal_uL1_CS"/>
</dbReference>
<dbReference type="NCBIfam" id="TIGR01169">
    <property type="entry name" value="rplA_bact"/>
    <property type="match status" value="1"/>
</dbReference>
<dbReference type="PANTHER" id="PTHR36427">
    <property type="entry name" value="54S RIBOSOMAL PROTEIN L1, MITOCHONDRIAL"/>
    <property type="match status" value="1"/>
</dbReference>
<dbReference type="PANTHER" id="PTHR36427:SF3">
    <property type="entry name" value="LARGE RIBOSOMAL SUBUNIT PROTEIN UL1M"/>
    <property type="match status" value="1"/>
</dbReference>
<dbReference type="Pfam" id="PF00687">
    <property type="entry name" value="Ribosomal_L1"/>
    <property type="match status" value="1"/>
</dbReference>
<dbReference type="PIRSF" id="PIRSF002155">
    <property type="entry name" value="Ribosomal_L1"/>
    <property type="match status" value="1"/>
</dbReference>
<dbReference type="SUPFAM" id="SSF56808">
    <property type="entry name" value="Ribosomal protein L1"/>
    <property type="match status" value="1"/>
</dbReference>
<dbReference type="PROSITE" id="PS01199">
    <property type="entry name" value="RIBOSOMAL_L1"/>
    <property type="match status" value="1"/>
</dbReference>
<protein>
    <recommendedName>
        <fullName evidence="1">Large ribosomal subunit protein uL1</fullName>
    </recommendedName>
    <alternativeName>
        <fullName evidence="2">50S ribosomal protein L1</fullName>
    </alternativeName>
</protein>
<feature type="chain" id="PRO_1000141460" description="Large ribosomal subunit protein uL1">
    <location>
        <begin position="1"/>
        <end position="233"/>
    </location>
</feature>
<accession>B8CNC2</accession>
<proteinExistence type="inferred from homology"/>
<reference key="1">
    <citation type="journal article" date="2008" name="PLoS ONE">
        <title>Environmental adaptation: genomic analysis of the piezotolerant and psychrotolerant deep-sea iron reducing bacterium Shewanella piezotolerans WP3.</title>
        <authorList>
            <person name="Wang F."/>
            <person name="Wang J."/>
            <person name="Jian H."/>
            <person name="Zhang B."/>
            <person name="Li S."/>
            <person name="Wang F."/>
            <person name="Zeng X."/>
            <person name="Gao L."/>
            <person name="Bartlett D.H."/>
            <person name="Yu J."/>
            <person name="Hu S."/>
            <person name="Xiao X."/>
        </authorList>
    </citation>
    <scope>NUCLEOTIDE SEQUENCE [LARGE SCALE GENOMIC DNA]</scope>
    <source>
        <strain>WP3 / JCM 13877</strain>
    </source>
</reference>
<keyword id="KW-0678">Repressor</keyword>
<keyword id="KW-0687">Ribonucleoprotein</keyword>
<keyword id="KW-0689">Ribosomal protein</keyword>
<keyword id="KW-0694">RNA-binding</keyword>
<keyword id="KW-0699">rRNA-binding</keyword>
<keyword id="KW-0810">Translation regulation</keyword>
<keyword id="KW-0820">tRNA-binding</keyword>
<name>RL1_SHEPW</name>
<evidence type="ECO:0000255" key="1">
    <source>
        <dbReference type="HAMAP-Rule" id="MF_01318"/>
    </source>
</evidence>
<evidence type="ECO:0000305" key="2"/>
<comment type="function">
    <text evidence="1">Binds directly to 23S rRNA. The L1 stalk is quite mobile in the ribosome, and is involved in E site tRNA release.</text>
</comment>
<comment type="function">
    <text evidence="1">Protein L1 is also a translational repressor protein, it controls the translation of the L11 operon by binding to its mRNA.</text>
</comment>
<comment type="subunit">
    <text evidence="1">Part of the 50S ribosomal subunit.</text>
</comment>
<comment type="similarity">
    <text evidence="1">Belongs to the universal ribosomal protein uL1 family.</text>
</comment>
<organism>
    <name type="scientific">Shewanella piezotolerans (strain WP3 / JCM 13877)</name>
    <dbReference type="NCBI Taxonomy" id="225849"/>
    <lineage>
        <taxon>Bacteria</taxon>
        <taxon>Pseudomonadati</taxon>
        <taxon>Pseudomonadota</taxon>
        <taxon>Gammaproteobacteria</taxon>
        <taxon>Alteromonadales</taxon>
        <taxon>Shewanellaceae</taxon>
        <taxon>Shewanella</taxon>
    </lineage>
</organism>
<sequence length="233" mass="24567">MAKLTKRARLIREKVEVTKNYDINEAVALLKELATAKFVESVDVAVNLGVDPRKSDQNVRGATVLPHGTGREVRVAVFTQGANAEAATAAGAELVGMDELAAQVKAGEMNFDVVIASPDAMRVVGQLGQILGPRGLMPNPKTGTVTPNVAEAVKNAKAGQVRYRNDKNGIIHTTIGKVDFETAQLKENLEALLAALKKAKPAAAKGVFLKKVSISTTMGAGVAVDQSTLEDVK</sequence>